<name>ALTA7_ALTAL</name>
<protein>
    <recommendedName>
        <fullName>Minor allergen Alt a 7</fullName>
    </recommendedName>
    <alternativeName>
        <fullName>Allergen Alt a VII</fullName>
    </alternativeName>
    <allergenName>Alt a 7</allergenName>
</protein>
<evidence type="ECO:0000255" key="1">
    <source>
        <dbReference type="PROSITE-ProRule" id="PRU00088"/>
    </source>
</evidence>
<evidence type="ECO:0000305" key="2"/>
<organism>
    <name type="scientific">Alternaria alternata</name>
    <name type="common">Alternaria rot fungus</name>
    <name type="synonym">Torula alternata</name>
    <dbReference type="NCBI Taxonomy" id="5599"/>
    <lineage>
        <taxon>Eukaryota</taxon>
        <taxon>Fungi</taxon>
        <taxon>Dikarya</taxon>
        <taxon>Ascomycota</taxon>
        <taxon>Pezizomycotina</taxon>
        <taxon>Dothideomycetes</taxon>
        <taxon>Pleosporomycetidae</taxon>
        <taxon>Pleosporales</taxon>
        <taxon>Pleosporineae</taxon>
        <taxon>Pleosporaceae</taxon>
        <taxon>Alternaria</taxon>
        <taxon>Alternaria sect. Alternaria</taxon>
        <taxon>Alternaria alternata complex</taxon>
    </lineage>
</organism>
<comment type="subcellular location">
    <subcellularLocation>
        <location evidence="2">Cytoplasm</location>
    </subcellularLocation>
</comment>
<comment type="allergen">
    <text>Causes an allergic reaction in human.</text>
</comment>
<comment type="similarity">
    <text evidence="2">Belongs to the WrbA family.</text>
</comment>
<sequence length="204" mass="22056">MAPKIAIVYYSMYGHIKKMADAELKGIQEAGGDAKLFQVAETLPQEVLDKMYAPPKDSSVPVLEDPAVLEEFDGILFGIPTRYGNFPAQFKTFWDKTGKQWQQGAFWGKYAGVFVSTGTLGGGQETTAITSMSTLVDHGFIYVPLGYKTAFSMLANLDEVHGGSPWGAGTFSAGDGSRQPSELELNIAQAQGKAFYEAVAKAHQ</sequence>
<accession>P42058</accession>
<reference key="1">
    <citation type="journal article" date="1995" name="Mol. Immunol.">
        <title>Molecular cloning of major and minor allergens of Alternaria alternata and Cladosporium herbarum.</title>
        <authorList>
            <person name="Achatz G."/>
            <person name="Oberkofler H."/>
            <person name="Lechenauer E."/>
            <person name="Simon-Nobbe B."/>
            <person name="Unger A."/>
            <person name="Kandler D."/>
            <person name="Ebner C."/>
            <person name="Prillinger H."/>
            <person name="Kraft D."/>
            <person name="Breitenbach M."/>
        </authorList>
    </citation>
    <scope>NUCLEOTIDE SEQUENCE [MRNA]</scope>
    <source>
        <strain>08-0203-Berlin</strain>
    </source>
</reference>
<keyword id="KW-0020">Allergen</keyword>
<keyword id="KW-0963">Cytoplasm</keyword>
<gene>
    <name type="primary">ALTA7</name>
</gene>
<dbReference type="EMBL" id="X78225">
    <property type="protein sequence ID" value="CAA55069.1"/>
    <property type="molecule type" value="mRNA"/>
</dbReference>
<dbReference type="PIR" id="S43111">
    <property type="entry name" value="S43111"/>
</dbReference>
<dbReference type="SMR" id="P42058"/>
<dbReference type="Allergome" id="21">
    <property type="allergen name" value="Alt a 7"/>
</dbReference>
<dbReference type="Allergome" id="3064">
    <property type="allergen name" value="Alt a 7.0101"/>
</dbReference>
<dbReference type="CAZy" id="AA6">
    <property type="family name" value="Auxiliary Activities 6"/>
</dbReference>
<dbReference type="VEuPathDB" id="FungiDB:CC77DRAFT_839422"/>
<dbReference type="GO" id="GO:0005737">
    <property type="term" value="C:cytoplasm"/>
    <property type="evidence" value="ECO:0007669"/>
    <property type="project" value="UniProtKB-SubCell"/>
</dbReference>
<dbReference type="GO" id="GO:0016020">
    <property type="term" value="C:membrane"/>
    <property type="evidence" value="ECO:0007669"/>
    <property type="project" value="TreeGrafter"/>
</dbReference>
<dbReference type="GO" id="GO:0010181">
    <property type="term" value="F:FMN binding"/>
    <property type="evidence" value="ECO:0007669"/>
    <property type="project" value="InterPro"/>
</dbReference>
<dbReference type="GO" id="GO:0003955">
    <property type="term" value="F:NAD(P)H dehydrogenase (quinone) activity"/>
    <property type="evidence" value="ECO:0007669"/>
    <property type="project" value="InterPro"/>
</dbReference>
<dbReference type="FunFam" id="3.40.50.360:FF:000001">
    <property type="entry name" value="NAD(P)H dehydrogenase (Quinone) FQR1-like"/>
    <property type="match status" value="1"/>
</dbReference>
<dbReference type="Gene3D" id="3.40.50.360">
    <property type="match status" value="1"/>
</dbReference>
<dbReference type="InterPro" id="IPR008254">
    <property type="entry name" value="Flavodoxin/NO_synth"/>
</dbReference>
<dbReference type="InterPro" id="IPR029039">
    <property type="entry name" value="Flavoprotein-like_sf"/>
</dbReference>
<dbReference type="InterPro" id="IPR010089">
    <property type="entry name" value="Flavoprotein_WrbA-like"/>
</dbReference>
<dbReference type="InterPro" id="IPR005025">
    <property type="entry name" value="FMN_Rdtase-like_dom"/>
</dbReference>
<dbReference type="NCBIfam" id="TIGR01755">
    <property type="entry name" value="flav_wrbA"/>
    <property type="match status" value="1"/>
</dbReference>
<dbReference type="NCBIfam" id="NF002999">
    <property type="entry name" value="PRK03767.1"/>
    <property type="match status" value="1"/>
</dbReference>
<dbReference type="PANTHER" id="PTHR30546">
    <property type="entry name" value="FLAVODOXIN-RELATED PROTEIN WRBA-RELATED"/>
    <property type="match status" value="1"/>
</dbReference>
<dbReference type="PANTHER" id="PTHR30546:SF23">
    <property type="entry name" value="FLAVOPROTEIN-LIKE PROTEIN YCP4-RELATED"/>
    <property type="match status" value="1"/>
</dbReference>
<dbReference type="Pfam" id="PF03358">
    <property type="entry name" value="FMN_red"/>
    <property type="match status" value="1"/>
</dbReference>
<dbReference type="SUPFAM" id="SSF52218">
    <property type="entry name" value="Flavoproteins"/>
    <property type="match status" value="1"/>
</dbReference>
<dbReference type="PROSITE" id="PS50902">
    <property type="entry name" value="FLAVODOXIN_LIKE"/>
    <property type="match status" value="1"/>
</dbReference>
<feature type="chain" id="PRO_0000200764" description="Minor allergen Alt a 7">
    <location>
        <begin position="1"/>
        <end position="204"/>
    </location>
</feature>
<feature type="domain" description="Flavodoxin-like" evidence="1">
    <location>
        <begin position="5"/>
        <end position="195"/>
    </location>
</feature>
<proteinExistence type="evidence at protein level"/>